<dbReference type="EC" id="2.7.2.3" evidence="1"/>
<dbReference type="EMBL" id="AM181176">
    <property type="protein sequence ID" value="CAY53053.1"/>
    <property type="molecule type" value="Genomic_DNA"/>
</dbReference>
<dbReference type="RefSeq" id="WP_015886293.1">
    <property type="nucleotide sequence ID" value="NC_012660.1"/>
</dbReference>
<dbReference type="SMR" id="C3K3F1"/>
<dbReference type="STRING" id="294.SRM1_05356"/>
<dbReference type="eggNOG" id="COG0126">
    <property type="taxonomic scope" value="Bacteria"/>
</dbReference>
<dbReference type="HOGENOM" id="CLU_025427_0_2_6"/>
<dbReference type="OrthoDB" id="9808460at2"/>
<dbReference type="UniPathway" id="UPA00109">
    <property type="reaction ID" value="UER00185"/>
</dbReference>
<dbReference type="GO" id="GO:0005829">
    <property type="term" value="C:cytosol"/>
    <property type="evidence" value="ECO:0007669"/>
    <property type="project" value="TreeGrafter"/>
</dbReference>
<dbReference type="GO" id="GO:0043531">
    <property type="term" value="F:ADP binding"/>
    <property type="evidence" value="ECO:0007669"/>
    <property type="project" value="TreeGrafter"/>
</dbReference>
<dbReference type="GO" id="GO:0005524">
    <property type="term" value="F:ATP binding"/>
    <property type="evidence" value="ECO:0007669"/>
    <property type="project" value="UniProtKB-KW"/>
</dbReference>
<dbReference type="GO" id="GO:0004618">
    <property type="term" value="F:phosphoglycerate kinase activity"/>
    <property type="evidence" value="ECO:0007669"/>
    <property type="project" value="UniProtKB-UniRule"/>
</dbReference>
<dbReference type="GO" id="GO:0006094">
    <property type="term" value="P:gluconeogenesis"/>
    <property type="evidence" value="ECO:0007669"/>
    <property type="project" value="TreeGrafter"/>
</dbReference>
<dbReference type="GO" id="GO:0006096">
    <property type="term" value="P:glycolytic process"/>
    <property type="evidence" value="ECO:0007669"/>
    <property type="project" value="UniProtKB-UniRule"/>
</dbReference>
<dbReference type="FunFam" id="3.40.50.1260:FF:000001">
    <property type="entry name" value="Phosphoglycerate kinase"/>
    <property type="match status" value="1"/>
</dbReference>
<dbReference type="FunFam" id="3.40.50.1260:FF:000002">
    <property type="entry name" value="Phosphoglycerate kinase"/>
    <property type="match status" value="1"/>
</dbReference>
<dbReference type="Gene3D" id="3.40.50.1260">
    <property type="entry name" value="Phosphoglycerate kinase, N-terminal domain"/>
    <property type="match status" value="2"/>
</dbReference>
<dbReference type="HAMAP" id="MF_00145">
    <property type="entry name" value="Phosphoglyc_kinase"/>
    <property type="match status" value="1"/>
</dbReference>
<dbReference type="InterPro" id="IPR001576">
    <property type="entry name" value="Phosphoglycerate_kinase"/>
</dbReference>
<dbReference type="InterPro" id="IPR015911">
    <property type="entry name" value="Phosphoglycerate_kinase_CS"/>
</dbReference>
<dbReference type="InterPro" id="IPR015824">
    <property type="entry name" value="Phosphoglycerate_kinase_N"/>
</dbReference>
<dbReference type="InterPro" id="IPR036043">
    <property type="entry name" value="Phosphoglycerate_kinase_sf"/>
</dbReference>
<dbReference type="PANTHER" id="PTHR11406">
    <property type="entry name" value="PHOSPHOGLYCERATE KINASE"/>
    <property type="match status" value="1"/>
</dbReference>
<dbReference type="PANTHER" id="PTHR11406:SF23">
    <property type="entry name" value="PHOSPHOGLYCERATE KINASE 1, CHLOROPLASTIC-RELATED"/>
    <property type="match status" value="1"/>
</dbReference>
<dbReference type="Pfam" id="PF00162">
    <property type="entry name" value="PGK"/>
    <property type="match status" value="1"/>
</dbReference>
<dbReference type="PIRSF" id="PIRSF000724">
    <property type="entry name" value="Pgk"/>
    <property type="match status" value="1"/>
</dbReference>
<dbReference type="PRINTS" id="PR00477">
    <property type="entry name" value="PHGLYCKINASE"/>
</dbReference>
<dbReference type="SUPFAM" id="SSF53748">
    <property type="entry name" value="Phosphoglycerate kinase"/>
    <property type="match status" value="1"/>
</dbReference>
<dbReference type="PROSITE" id="PS00111">
    <property type="entry name" value="PGLYCERATE_KINASE"/>
    <property type="match status" value="1"/>
</dbReference>
<name>PGK_PSEFS</name>
<sequence>MTVLKMTDLDLQGKRVLIREDLNVPVKDGVVTSDARILASLPTIKLALEKGAAVMVCSHLGRPTEGEFSAENSLKPVAEYLSKALGRDVPLVADYLGGVDVKAGDIVLFENVRFNKGEKKNSDELAQQYAALCDVFVMDAFGTAHRAEGSTHGVAKFAKVAAAGPLLAAELDALGKALGAPAQPMAAIVAGSKVSTKLDVLNSLSQICNQLIVGGGIANTFLAAAGHPVGKSLYEPDLLDTARAIAAKVSVPLPVDVVVAKEFAESAEATVKLIADVADDDMILDIGPQTAANFAELLKASQTILWNGPVGVFEFDQFGNGTKVLAKAIAESSAFSIAGGGDTLAAIDKYGVADQISYISTGGGAFLEFVEGKVLPAVEVLETRAKG</sequence>
<keyword id="KW-0067">ATP-binding</keyword>
<keyword id="KW-0963">Cytoplasm</keyword>
<keyword id="KW-0324">Glycolysis</keyword>
<keyword id="KW-0418">Kinase</keyword>
<keyword id="KW-0547">Nucleotide-binding</keyword>
<keyword id="KW-0808">Transferase</keyword>
<organism>
    <name type="scientific">Pseudomonas fluorescens (strain SBW25)</name>
    <dbReference type="NCBI Taxonomy" id="216595"/>
    <lineage>
        <taxon>Bacteria</taxon>
        <taxon>Pseudomonadati</taxon>
        <taxon>Pseudomonadota</taxon>
        <taxon>Gammaproteobacteria</taxon>
        <taxon>Pseudomonadales</taxon>
        <taxon>Pseudomonadaceae</taxon>
        <taxon>Pseudomonas</taxon>
    </lineage>
</organism>
<reference key="1">
    <citation type="journal article" date="2009" name="Genome Biol.">
        <title>Genomic and genetic analyses of diversity and plant interactions of Pseudomonas fluorescens.</title>
        <authorList>
            <person name="Silby M.W."/>
            <person name="Cerdeno-Tarraga A.M."/>
            <person name="Vernikos G.S."/>
            <person name="Giddens S.R."/>
            <person name="Jackson R.W."/>
            <person name="Preston G.M."/>
            <person name="Zhang X.-X."/>
            <person name="Moon C.D."/>
            <person name="Gehrig S.M."/>
            <person name="Godfrey S.A.C."/>
            <person name="Knight C.G."/>
            <person name="Malone J.G."/>
            <person name="Robinson Z."/>
            <person name="Spiers A.J."/>
            <person name="Harris S."/>
            <person name="Challis G.L."/>
            <person name="Yaxley A.M."/>
            <person name="Harris D."/>
            <person name="Seeger K."/>
            <person name="Murphy L."/>
            <person name="Rutter S."/>
            <person name="Squares R."/>
            <person name="Quail M.A."/>
            <person name="Saunders E."/>
            <person name="Mavromatis K."/>
            <person name="Brettin T.S."/>
            <person name="Bentley S.D."/>
            <person name="Hothersall J."/>
            <person name="Stephens E."/>
            <person name="Thomas C.M."/>
            <person name="Parkhill J."/>
            <person name="Levy S.B."/>
            <person name="Rainey P.B."/>
            <person name="Thomson N.R."/>
        </authorList>
    </citation>
    <scope>NUCLEOTIDE SEQUENCE [LARGE SCALE GENOMIC DNA]</scope>
    <source>
        <strain>SBW25</strain>
    </source>
</reference>
<feature type="chain" id="PRO_1000203345" description="Phosphoglycerate kinase">
    <location>
        <begin position="1"/>
        <end position="387"/>
    </location>
</feature>
<feature type="binding site" evidence="1">
    <location>
        <begin position="21"/>
        <end position="23"/>
    </location>
    <ligand>
        <name>substrate</name>
    </ligand>
</feature>
<feature type="binding site" evidence="1">
    <location>
        <position position="36"/>
    </location>
    <ligand>
        <name>substrate</name>
    </ligand>
</feature>
<feature type="binding site" evidence="1">
    <location>
        <begin position="59"/>
        <end position="62"/>
    </location>
    <ligand>
        <name>substrate</name>
    </ligand>
</feature>
<feature type="binding site" evidence="1">
    <location>
        <position position="113"/>
    </location>
    <ligand>
        <name>substrate</name>
    </ligand>
</feature>
<feature type="binding site" evidence="1">
    <location>
        <position position="146"/>
    </location>
    <ligand>
        <name>substrate</name>
    </ligand>
</feature>
<feature type="binding site" evidence="1">
    <location>
        <position position="197"/>
    </location>
    <ligand>
        <name>ATP</name>
        <dbReference type="ChEBI" id="CHEBI:30616"/>
    </ligand>
</feature>
<feature type="binding site" evidence="1">
    <location>
        <position position="314"/>
    </location>
    <ligand>
        <name>ATP</name>
        <dbReference type="ChEBI" id="CHEBI:30616"/>
    </ligand>
</feature>
<feature type="binding site" evidence="1">
    <location>
        <begin position="340"/>
        <end position="343"/>
    </location>
    <ligand>
        <name>ATP</name>
        <dbReference type="ChEBI" id="CHEBI:30616"/>
    </ligand>
</feature>
<protein>
    <recommendedName>
        <fullName evidence="1">Phosphoglycerate kinase</fullName>
        <ecNumber evidence="1">2.7.2.3</ecNumber>
    </recommendedName>
</protein>
<accession>C3K3F1</accession>
<evidence type="ECO:0000255" key="1">
    <source>
        <dbReference type="HAMAP-Rule" id="MF_00145"/>
    </source>
</evidence>
<comment type="catalytic activity">
    <reaction evidence="1">
        <text>(2R)-3-phosphoglycerate + ATP = (2R)-3-phospho-glyceroyl phosphate + ADP</text>
        <dbReference type="Rhea" id="RHEA:14801"/>
        <dbReference type="ChEBI" id="CHEBI:30616"/>
        <dbReference type="ChEBI" id="CHEBI:57604"/>
        <dbReference type="ChEBI" id="CHEBI:58272"/>
        <dbReference type="ChEBI" id="CHEBI:456216"/>
        <dbReference type="EC" id="2.7.2.3"/>
    </reaction>
</comment>
<comment type="pathway">
    <text evidence="1">Carbohydrate degradation; glycolysis; pyruvate from D-glyceraldehyde 3-phosphate: step 2/5.</text>
</comment>
<comment type="subunit">
    <text evidence="1">Monomer.</text>
</comment>
<comment type="subcellular location">
    <subcellularLocation>
        <location evidence="1">Cytoplasm</location>
    </subcellularLocation>
</comment>
<comment type="similarity">
    <text evidence="1">Belongs to the phosphoglycerate kinase family.</text>
</comment>
<gene>
    <name evidence="1" type="primary">pgk</name>
    <name type="ordered locus">PFLU_5705</name>
</gene>
<proteinExistence type="inferred from homology"/>